<organism>
    <name type="scientific">Danio rerio</name>
    <name type="common">Zebrafish</name>
    <name type="synonym">Brachydanio rerio</name>
    <dbReference type="NCBI Taxonomy" id="7955"/>
    <lineage>
        <taxon>Eukaryota</taxon>
        <taxon>Metazoa</taxon>
        <taxon>Chordata</taxon>
        <taxon>Craniata</taxon>
        <taxon>Vertebrata</taxon>
        <taxon>Euteleostomi</taxon>
        <taxon>Actinopterygii</taxon>
        <taxon>Neopterygii</taxon>
        <taxon>Teleostei</taxon>
        <taxon>Ostariophysi</taxon>
        <taxon>Cypriniformes</taxon>
        <taxon>Danionidae</taxon>
        <taxon>Danioninae</taxon>
        <taxon>Danio</taxon>
    </lineage>
</organism>
<sequence>MSIKLNALFSDSYVDVSQYRDQHFKGNRYEQEKLLKQSATLYVGNLSFYTTEEQVHELFAKCGDVKRIIIGLDKIKKTACGFCFVEYYTRADAENAMRFVNGTRLDDRIIRTDWDAGFKEGRQYGRGKSGGQVRDEYRQDYDPARGGYGKMVQKS</sequence>
<proteinExistence type="evidence at transcript level"/>
<protein>
    <recommendedName>
        <fullName>Nuclear cap-binding protein subunit 2</fullName>
    </recommendedName>
    <alternativeName>
        <fullName>20 kDa nuclear cap-binding protein</fullName>
    </alternativeName>
    <alternativeName>
        <fullName>NCBP 20 kDa subunit</fullName>
        <shortName>CBP20</shortName>
    </alternativeName>
</protein>
<reference key="1">
    <citation type="journal article" date="2002" name="Nat. Genet.">
        <title>Insertional mutagenesis in zebrafish rapidly identifies genes essential for early vertebrate development.</title>
        <authorList>
            <person name="Golling G."/>
            <person name="Amsterdam A."/>
            <person name="Sun Z."/>
            <person name="Antonelli M."/>
            <person name="Maldonado E."/>
            <person name="Chen W."/>
            <person name="Burgess S."/>
            <person name="Haldi M."/>
            <person name="Artzt K."/>
            <person name="Farrington S."/>
            <person name="Lin S.-Y."/>
            <person name="Nissen R.M."/>
            <person name="Hopkins N."/>
        </authorList>
    </citation>
    <scope>NUCLEOTIDE SEQUENCE [LARGE SCALE MRNA]</scope>
    <source>
        <tissue>Embryo</tissue>
    </source>
</reference>
<reference key="2">
    <citation type="journal article" date="2013" name="Nature">
        <title>The zebrafish reference genome sequence and its relationship to the human genome.</title>
        <authorList>
            <person name="Howe K."/>
            <person name="Clark M.D."/>
            <person name="Torroja C.F."/>
            <person name="Torrance J."/>
            <person name="Berthelot C."/>
            <person name="Muffato M."/>
            <person name="Collins J.E."/>
            <person name="Humphray S."/>
            <person name="McLaren K."/>
            <person name="Matthews L."/>
            <person name="McLaren S."/>
            <person name="Sealy I."/>
            <person name="Caccamo M."/>
            <person name="Churcher C."/>
            <person name="Scott C."/>
            <person name="Barrett J.C."/>
            <person name="Koch R."/>
            <person name="Rauch G.J."/>
            <person name="White S."/>
            <person name="Chow W."/>
            <person name="Kilian B."/>
            <person name="Quintais L.T."/>
            <person name="Guerra-Assuncao J.A."/>
            <person name="Zhou Y."/>
            <person name="Gu Y."/>
            <person name="Yen J."/>
            <person name="Vogel J.H."/>
            <person name="Eyre T."/>
            <person name="Redmond S."/>
            <person name="Banerjee R."/>
            <person name="Chi J."/>
            <person name="Fu B."/>
            <person name="Langley E."/>
            <person name="Maguire S.F."/>
            <person name="Laird G.K."/>
            <person name="Lloyd D."/>
            <person name="Kenyon E."/>
            <person name="Donaldson S."/>
            <person name="Sehra H."/>
            <person name="Almeida-King J."/>
            <person name="Loveland J."/>
            <person name="Trevanion S."/>
            <person name="Jones M."/>
            <person name="Quail M."/>
            <person name="Willey D."/>
            <person name="Hunt A."/>
            <person name="Burton J."/>
            <person name="Sims S."/>
            <person name="McLay K."/>
            <person name="Plumb B."/>
            <person name="Davis J."/>
            <person name="Clee C."/>
            <person name="Oliver K."/>
            <person name="Clark R."/>
            <person name="Riddle C."/>
            <person name="Elliot D."/>
            <person name="Threadgold G."/>
            <person name="Harden G."/>
            <person name="Ware D."/>
            <person name="Begum S."/>
            <person name="Mortimore B."/>
            <person name="Kerry G."/>
            <person name="Heath P."/>
            <person name="Phillimore B."/>
            <person name="Tracey A."/>
            <person name="Corby N."/>
            <person name="Dunn M."/>
            <person name="Johnson C."/>
            <person name="Wood J."/>
            <person name="Clark S."/>
            <person name="Pelan S."/>
            <person name="Griffiths G."/>
            <person name="Smith M."/>
            <person name="Glithero R."/>
            <person name="Howden P."/>
            <person name="Barker N."/>
            <person name="Lloyd C."/>
            <person name="Stevens C."/>
            <person name="Harley J."/>
            <person name="Holt K."/>
            <person name="Panagiotidis G."/>
            <person name="Lovell J."/>
            <person name="Beasley H."/>
            <person name="Henderson C."/>
            <person name="Gordon D."/>
            <person name="Auger K."/>
            <person name="Wright D."/>
            <person name="Collins J."/>
            <person name="Raisen C."/>
            <person name="Dyer L."/>
            <person name="Leung K."/>
            <person name="Robertson L."/>
            <person name="Ambridge K."/>
            <person name="Leongamornlert D."/>
            <person name="McGuire S."/>
            <person name="Gilderthorp R."/>
            <person name="Griffiths C."/>
            <person name="Manthravadi D."/>
            <person name="Nichol S."/>
            <person name="Barker G."/>
            <person name="Whitehead S."/>
            <person name="Kay M."/>
            <person name="Brown J."/>
            <person name="Murnane C."/>
            <person name="Gray E."/>
            <person name="Humphries M."/>
            <person name="Sycamore N."/>
            <person name="Barker D."/>
            <person name="Saunders D."/>
            <person name="Wallis J."/>
            <person name="Babbage A."/>
            <person name="Hammond S."/>
            <person name="Mashreghi-Mohammadi M."/>
            <person name="Barr L."/>
            <person name="Martin S."/>
            <person name="Wray P."/>
            <person name="Ellington A."/>
            <person name="Matthews N."/>
            <person name="Ellwood M."/>
            <person name="Woodmansey R."/>
            <person name="Clark G."/>
            <person name="Cooper J."/>
            <person name="Tromans A."/>
            <person name="Grafham D."/>
            <person name="Skuce C."/>
            <person name="Pandian R."/>
            <person name="Andrews R."/>
            <person name="Harrison E."/>
            <person name="Kimberley A."/>
            <person name="Garnett J."/>
            <person name="Fosker N."/>
            <person name="Hall R."/>
            <person name="Garner P."/>
            <person name="Kelly D."/>
            <person name="Bird C."/>
            <person name="Palmer S."/>
            <person name="Gehring I."/>
            <person name="Berger A."/>
            <person name="Dooley C.M."/>
            <person name="Ersan-Urun Z."/>
            <person name="Eser C."/>
            <person name="Geiger H."/>
            <person name="Geisler M."/>
            <person name="Karotki L."/>
            <person name="Kirn A."/>
            <person name="Konantz J."/>
            <person name="Konantz M."/>
            <person name="Oberlander M."/>
            <person name="Rudolph-Geiger S."/>
            <person name="Teucke M."/>
            <person name="Lanz C."/>
            <person name="Raddatz G."/>
            <person name="Osoegawa K."/>
            <person name="Zhu B."/>
            <person name="Rapp A."/>
            <person name="Widaa S."/>
            <person name="Langford C."/>
            <person name="Yang F."/>
            <person name="Schuster S.C."/>
            <person name="Carter N.P."/>
            <person name="Harrow J."/>
            <person name="Ning Z."/>
            <person name="Herrero J."/>
            <person name="Searle S.M."/>
            <person name="Enright A."/>
            <person name="Geisler R."/>
            <person name="Plasterk R.H."/>
            <person name="Lee C."/>
            <person name="Westerfield M."/>
            <person name="de Jong P.J."/>
            <person name="Zon L.I."/>
            <person name="Postlethwait J.H."/>
            <person name="Nusslein-Volhard C."/>
            <person name="Hubbard T.J."/>
            <person name="Roest Crollius H."/>
            <person name="Rogers J."/>
            <person name="Stemple D.L."/>
        </authorList>
    </citation>
    <scope>NUCLEOTIDE SEQUENCE [LARGE SCALE GENOMIC DNA]</scope>
    <source>
        <strain>Tuebingen</strain>
    </source>
</reference>
<reference key="3">
    <citation type="submission" date="2004-10" db="EMBL/GenBank/DDBJ databases">
        <authorList>
            <consortium name="NIH - Zebrafish Gene Collection (ZGC) project"/>
        </authorList>
    </citation>
    <scope>NUCLEOTIDE SEQUENCE [LARGE SCALE MRNA]</scope>
</reference>
<keyword id="KW-0963">Cytoplasm</keyword>
<keyword id="KW-0507">mRNA processing</keyword>
<keyword id="KW-0508">mRNA splicing</keyword>
<keyword id="KW-0509">mRNA transport</keyword>
<keyword id="KW-0866">Nonsense-mediated mRNA decay</keyword>
<keyword id="KW-0539">Nucleus</keyword>
<keyword id="KW-1185">Reference proteome</keyword>
<keyword id="KW-0694">RNA-binding</keyword>
<keyword id="KW-0943">RNA-mediated gene silencing</keyword>
<keyword id="KW-0810">Translation regulation</keyword>
<keyword id="KW-0813">Transport</keyword>
<dbReference type="EMBL" id="AY099530">
    <property type="protein sequence ID" value="AAM28218.1"/>
    <property type="molecule type" value="mRNA"/>
</dbReference>
<dbReference type="EMBL" id="AL953867">
    <property type="protein sequence ID" value="CAK04823.1"/>
    <property type="molecule type" value="Genomic_DNA"/>
</dbReference>
<dbReference type="EMBL" id="BC083529">
    <property type="protein sequence ID" value="AAH83529.1"/>
    <property type="molecule type" value="mRNA"/>
</dbReference>
<dbReference type="RefSeq" id="NP_775356.1">
    <property type="nucleotide sequence ID" value="NM_173249.1"/>
</dbReference>
<dbReference type="SMR" id="Q8JGR6"/>
<dbReference type="FunCoup" id="Q8JGR6">
    <property type="interactions" value="2350"/>
</dbReference>
<dbReference type="STRING" id="7955.ENSDARP00000020688"/>
<dbReference type="PaxDb" id="7955-ENSDARP00000020688"/>
<dbReference type="Ensembl" id="ENSDART00000008365">
    <property type="protein sequence ID" value="ENSDARP00000020688"/>
    <property type="gene ID" value="ENSDARG00000014898"/>
</dbReference>
<dbReference type="GeneID" id="192325"/>
<dbReference type="KEGG" id="dre:192325"/>
<dbReference type="AGR" id="ZFIN:ZDB-GENE-020419-31"/>
<dbReference type="CTD" id="22916"/>
<dbReference type="ZFIN" id="ZDB-GENE-020419-31">
    <property type="gene designation" value="ncbp2"/>
</dbReference>
<dbReference type="eggNOG" id="KOG0121">
    <property type="taxonomic scope" value="Eukaryota"/>
</dbReference>
<dbReference type="HOGENOM" id="CLU_070952_2_0_1"/>
<dbReference type="InParanoid" id="Q8JGR6"/>
<dbReference type="OMA" id="TKCASPE"/>
<dbReference type="OrthoDB" id="201398at2759"/>
<dbReference type="PhylomeDB" id="Q8JGR6"/>
<dbReference type="TreeFam" id="TF313897"/>
<dbReference type="Reactome" id="R-DRE-6807505">
    <property type="pathway name" value="RNA polymerase II transcribes snRNA genes"/>
</dbReference>
<dbReference type="Reactome" id="R-DRE-72163">
    <property type="pathway name" value="mRNA Splicing - Major Pathway"/>
</dbReference>
<dbReference type="Reactome" id="R-DRE-975956">
    <property type="pathway name" value="Nonsense Mediated Decay (NMD) independent of the Exon Junction Complex (EJC)"/>
</dbReference>
<dbReference type="Reactome" id="R-DRE-975957">
    <property type="pathway name" value="Nonsense Mediated Decay (NMD) enhanced by the Exon Junction Complex (EJC)"/>
</dbReference>
<dbReference type="PRO" id="PR:Q8JGR6"/>
<dbReference type="Proteomes" id="UP000000437">
    <property type="component" value="Chromosome 22"/>
</dbReference>
<dbReference type="Bgee" id="ENSDARG00000014898">
    <property type="expression patterns" value="Expressed in mature ovarian follicle and 29 other cell types or tissues"/>
</dbReference>
<dbReference type="GO" id="GO:0005737">
    <property type="term" value="C:cytoplasm"/>
    <property type="evidence" value="ECO:0007669"/>
    <property type="project" value="UniProtKB-SubCell"/>
</dbReference>
<dbReference type="GO" id="GO:0005846">
    <property type="term" value="C:nuclear cap binding complex"/>
    <property type="evidence" value="ECO:0000318"/>
    <property type="project" value="GO_Central"/>
</dbReference>
<dbReference type="GO" id="GO:0005634">
    <property type="term" value="C:nucleus"/>
    <property type="evidence" value="ECO:0007669"/>
    <property type="project" value="UniProtKB-SubCell"/>
</dbReference>
<dbReference type="GO" id="GO:0003729">
    <property type="term" value="F:mRNA binding"/>
    <property type="evidence" value="ECO:0000250"/>
    <property type="project" value="UniProtKB"/>
</dbReference>
<dbReference type="GO" id="GO:0000340">
    <property type="term" value="F:RNA 7-methylguanosine cap binding"/>
    <property type="evidence" value="ECO:0000250"/>
    <property type="project" value="UniProtKB"/>
</dbReference>
<dbReference type="GO" id="GO:0000339">
    <property type="term" value="F:RNA cap binding"/>
    <property type="evidence" value="ECO:0000318"/>
    <property type="project" value="GO_Central"/>
</dbReference>
<dbReference type="GO" id="GO:0017069">
    <property type="term" value="F:snRNA binding"/>
    <property type="evidence" value="ECO:0000250"/>
    <property type="project" value="UniProtKB"/>
</dbReference>
<dbReference type="GO" id="GO:0045292">
    <property type="term" value="P:mRNA cis splicing, via spliceosome"/>
    <property type="evidence" value="ECO:0000250"/>
    <property type="project" value="UniProtKB"/>
</dbReference>
<dbReference type="GO" id="GO:0000398">
    <property type="term" value="P:mRNA splicing, via spliceosome"/>
    <property type="evidence" value="ECO:0000318"/>
    <property type="project" value="GO_Central"/>
</dbReference>
<dbReference type="GO" id="GO:0051028">
    <property type="term" value="P:mRNA transport"/>
    <property type="evidence" value="ECO:0007669"/>
    <property type="project" value="UniProtKB-KW"/>
</dbReference>
<dbReference type="GO" id="GO:0000184">
    <property type="term" value="P:nuclear-transcribed mRNA catabolic process, nonsense-mediated decay"/>
    <property type="evidence" value="ECO:0007669"/>
    <property type="project" value="UniProtKB-KW"/>
</dbReference>
<dbReference type="GO" id="GO:0046833">
    <property type="term" value="P:positive regulation of RNA export from nucleus"/>
    <property type="evidence" value="ECO:0000250"/>
    <property type="project" value="UniProtKB"/>
</dbReference>
<dbReference type="GO" id="GO:0006417">
    <property type="term" value="P:regulation of translation"/>
    <property type="evidence" value="ECO:0007669"/>
    <property type="project" value="UniProtKB-KW"/>
</dbReference>
<dbReference type="GO" id="GO:0031047">
    <property type="term" value="P:regulatory ncRNA-mediated gene silencing"/>
    <property type="evidence" value="ECO:0007669"/>
    <property type="project" value="UniProtKB-KW"/>
</dbReference>
<dbReference type="GO" id="GO:0008380">
    <property type="term" value="P:RNA splicing"/>
    <property type="evidence" value="ECO:0000250"/>
    <property type="project" value="UniProtKB"/>
</dbReference>
<dbReference type="GO" id="GO:0006408">
    <property type="term" value="P:snRNA export from nucleus"/>
    <property type="evidence" value="ECO:0000250"/>
    <property type="project" value="UniProtKB"/>
</dbReference>
<dbReference type="CDD" id="cd12240">
    <property type="entry name" value="RRM_NCBP2"/>
    <property type="match status" value="1"/>
</dbReference>
<dbReference type="FunFam" id="3.30.70.330:FF:000128">
    <property type="entry name" value="Nuclear cap-binding protein subunit 2"/>
    <property type="match status" value="1"/>
</dbReference>
<dbReference type="Gene3D" id="3.30.70.330">
    <property type="match status" value="1"/>
</dbReference>
<dbReference type="InterPro" id="IPR027157">
    <property type="entry name" value="NCBP2"/>
</dbReference>
<dbReference type="InterPro" id="IPR034148">
    <property type="entry name" value="NCBP2_RRM"/>
</dbReference>
<dbReference type="InterPro" id="IPR012677">
    <property type="entry name" value="Nucleotide-bd_a/b_plait_sf"/>
</dbReference>
<dbReference type="InterPro" id="IPR035979">
    <property type="entry name" value="RBD_domain_sf"/>
</dbReference>
<dbReference type="InterPro" id="IPR000504">
    <property type="entry name" value="RRM_dom"/>
</dbReference>
<dbReference type="PANTHER" id="PTHR18847">
    <property type="entry name" value="20 KD NUCLEAR CAP BINDING PROTEIN"/>
    <property type="match status" value="1"/>
</dbReference>
<dbReference type="PANTHER" id="PTHR18847:SF0">
    <property type="entry name" value="NUCLEAR CAP-BINDING PROTEIN SUBUNIT 2"/>
    <property type="match status" value="1"/>
</dbReference>
<dbReference type="Pfam" id="PF00076">
    <property type="entry name" value="RRM_1"/>
    <property type="match status" value="1"/>
</dbReference>
<dbReference type="SMART" id="SM00360">
    <property type="entry name" value="RRM"/>
    <property type="match status" value="1"/>
</dbReference>
<dbReference type="SUPFAM" id="SSF54928">
    <property type="entry name" value="RNA-binding domain, RBD"/>
    <property type="match status" value="1"/>
</dbReference>
<dbReference type="PROSITE" id="PS50102">
    <property type="entry name" value="RRM"/>
    <property type="match status" value="1"/>
</dbReference>
<accession>Q8JGR6</accession>
<accession>Q1MT38</accession>
<accession>Q5XIY9</accession>
<comment type="function">
    <text evidence="2">Component of the cap-binding complex (CBC), which binds co-transcriptionally to the 5' cap of pre-mRNAs and is involved in various processes such as pre-mRNA splicing, translation regulation, nonsense-mediated mRNA decay, RNA-mediated gene silencing (RNAi) by microRNAs (miRNAs) and mRNA export. The CBC complex is involved in mRNA export from the nucleus, leading to the recruitment of the mRNA export machinery to the 5' end of mRNA and to mRNA export in a 5' to 3' direction through the nuclear pore. The CBC complex is also involved in mediating U snRNA and intronless mRNAs export from the nucleus. The CBC complex is essential for a pioneer round of mRNA translation, before steady state translation when the CBC complex is replaced by cytoplasmic cap-binding protein eIF4E. The pioneer round of mRNA translation mediated by the CBC complex plays a central role in nonsense-mediated mRNA decay (NMD), NMD only taking place in mRNAs bound to the CBC complex, but not on eIF4E-bound mRNAs. The CBC complex enhances NMD in mRNAs containing at least one exon-junction complex (EJC), promoting the interaction between upf1 and upf2. The CBC complex is also involved in 'failsafe' NMD, which is independent of the EJC complex, while it does not participate in Staufen-mediated mRNA decay (SMD). During cell proliferation, the CBC complex is also involved in microRNAs (miRNAs) biogenesis via its interaction with srrt/ars2, thereby being required for miRNA-mediated RNA interference. The CBC complex also acts as a negative regulator of parn, thereby acting as an inhibitor of mRNA deadenylation. In the CBC complex, ncbp2/cbp20 recognizes and binds capped RNAs (m7GpppG-capped RNA) but requires ncbp1/cbp80 to stabilize the movement of its N-terminal loop and lock the CBC into a high affinity cap-binding state with the cap structure. The conventional cap-binding complex with NCBP2 binds both small nuclear RNA (snRNA) and messenger (mRNA) and is involved in their export from the nucleus (By similarity).</text>
</comment>
<comment type="subunit">
    <text evidence="2">Component of the nuclear cap-binding complex (CBC), a heterodimer composed of ncbp1/cbp80 and ncbp2/cbp20 that interacts with m7GpppG-capped RNA.</text>
</comment>
<comment type="subcellular location">
    <subcellularLocation>
        <location evidence="2">Nucleus</location>
    </subcellularLocation>
    <subcellularLocation>
        <location evidence="2">Cytoplasm</location>
    </subcellularLocation>
</comment>
<comment type="similarity">
    <text evidence="5">Belongs to the RRM NCBP2 family.</text>
</comment>
<feature type="chain" id="PRO_0000385251" description="Nuclear cap-binding protein subunit 2">
    <location>
        <begin position="1"/>
        <end position="155"/>
    </location>
</feature>
<feature type="domain" description="RRM" evidence="3">
    <location>
        <begin position="39"/>
        <end position="117"/>
    </location>
</feature>
<feature type="region of interest" description="Disordered" evidence="4">
    <location>
        <begin position="121"/>
        <end position="155"/>
    </location>
</feature>
<feature type="compositionally biased region" description="Basic and acidic residues" evidence="4">
    <location>
        <begin position="133"/>
        <end position="143"/>
    </location>
</feature>
<feature type="binding site" evidence="1">
    <location>
        <position position="19"/>
    </location>
    <ligand>
        <name>mRNA</name>
        <dbReference type="ChEBI" id="CHEBI:33699"/>
    </ligand>
    <ligandPart>
        <name>mRNA cap</name>
    </ligandPart>
</feature>
<feature type="binding site" evidence="1">
    <location>
        <position position="42"/>
    </location>
    <ligand>
        <name>mRNA</name>
        <dbReference type="ChEBI" id="CHEBI:33699"/>
    </ligand>
    <ligandPart>
        <name>mRNA cap</name>
    </ligandPart>
</feature>
<feature type="binding site" evidence="1">
    <location>
        <begin position="111"/>
        <end position="115"/>
    </location>
    <ligand>
        <name>mRNA</name>
        <dbReference type="ChEBI" id="CHEBI:33699"/>
    </ligand>
    <ligandPart>
        <name>mRNA cap</name>
    </ligandPart>
</feature>
<feature type="binding site" evidence="1">
    <location>
        <begin position="122"/>
        <end position="126"/>
    </location>
    <ligand>
        <name>mRNA</name>
        <dbReference type="ChEBI" id="CHEBI:33699"/>
    </ligand>
    <ligandPart>
        <name>mRNA cap</name>
    </ligandPart>
</feature>
<feature type="binding site" evidence="1">
    <location>
        <begin position="132"/>
        <end position="133"/>
    </location>
    <ligand>
        <name>mRNA</name>
        <dbReference type="ChEBI" id="CHEBI:33699"/>
    </ligand>
    <ligandPart>
        <name>mRNA cap</name>
    </ligandPart>
</feature>
<feature type="sequence conflict" description="In Ref. 1; AAM28218." evidence="5" ref="1">
    <original>S</original>
    <variation>F</variation>
    <location>
        <position position="12"/>
    </location>
</feature>
<feature type="sequence conflict" description="In Ref. 1; AAM28218." evidence="5" ref="1">
    <original>E</original>
    <variation>V</variation>
    <location>
        <position position="57"/>
    </location>
</feature>
<feature type="sequence conflict" description="In Ref. 3; AAH83529." evidence="5" ref="3">
    <original>R</original>
    <variation>W</variation>
    <location>
        <position position="126"/>
    </location>
</feature>
<evidence type="ECO:0000250" key="1"/>
<evidence type="ECO:0000250" key="2">
    <source>
        <dbReference type="UniProtKB" id="P52298"/>
    </source>
</evidence>
<evidence type="ECO:0000255" key="3">
    <source>
        <dbReference type="PROSITE-ProRule" id="PRU00176"/>
    </source>
</evidence>
<evidence type="ECO:0000256" key="4">
    <source>
        <dbReference type="SAM" id="MobiDB-lite"/>
    </source>
</evidence>
<evidence type="ECO:0000305" key="5"/>
<gene>
    <name type="primary">ncbp2</name>
    <name type="synonym">cbp20</name>
    <name type="ORF">ch211-258l4.5</name>
</gene>
<name>NCBP2_DANRE</name>